<organism>
    <name type="scientific">Drosophila melanogaster</name>
    <name type="common">Fruit fly</name>
    <dbReference type="NCBI Taxonomy" id="7227"/>
    <lineage>
        <taxon>Eukaryota</taxon>
        <taxon>Metazoa</taxon>
        <taxon>Ecdysozoa</taxon>
        <taxon>Arthropoda</taxon>
        <taxon>Hexapoda</taxon>
        <taxon>Insecta</taxon>
        <taxon>Pterygota</taxon>
        <taxon>Neoptera</taxon>
        <taxon>Endopterygota</taxon>
        <taxon>Diptera</taxon>
        <taxon>Brachycera</taxon>
        <taxon>Muscomorpha</taxon>
        <taxon>Ephydroidea</taxon>
        <taxon>Drosophilidae</taxon>
        <taxon>Drosophila</taxon>
        <taxon>Sophophora</taxon>
    </lineage>
</organism>
<evidence type="ECO:0000250" key="1"/>
<evidence type="ECO:0000255" key="2"/>
<evidence type="ECO:0000305" key="3"/>
<evidence type="ECO:0000312" key="4">
    <source>
        <dbReference type="FlyBase" id="FBgn0266673"/>
    </source>
</evidence>
<proteinExistence type="evidence at transcript level"/>
<dbReference type="EMBL" id="AJ242993">
    <property type="protein sequence ID" value="CAB44702.1"/>
    <property type="molecule type" value="Genomic_DNA"/>
</dbReference>
<dbReference type="EMBL" id="AJ242992">
    <property type="protein sequence ID" value="CAB44701.1"/>
    <property type="molecule type" value="mRNA"/>
</dbReference>
<dbReference type="EMBL" id="AE014297">
    <property type="protein sequence ID" value="AAF56241.1"/>
    <property type="molecule type" value="Genomic_DNA"/>
</dbReference>
<dbReference type="EMBL" id="AY058414">
    <property type="protein sequence ID" value="AAL13643.1"/>
    <property type="status" value="ALT_INIT"/>
    <property type="molecule type" value="mRNA"/>
</dbReference>
<dbReference type="RefSeq" id="NP_651218.1">
    <property type="nucleotide sequence ID" value="NM_142961.5"/>
</dbReference>
<dbReference type="SMR" id="Q9XTM1"/>
<dbReference type="BioGRID" id="67796">
    <property type="interactions" value="45"/>
</dbReference>
<dbReference type="ComplexPortal" id="CPX-2465">
    <property type="entry name" value="Exocyst"/>
</dbReference>
<dbReference type="DIP" id="DIP-18020N"/>
<dbReference type="FunCoup" id="Q9XTM1">
    <property type="interactions" value="1976"/>
</dbReference>
<dbReference type="IntAct" id="Q9XTM1">
    <property type="interactions" value="2"/>
</dbReference>
<dbReference type="STRING" id="7227.FBpp0083932"/>
<dbReference type="PaxDb" id="7227-FBpp0083932"/>
<dbReference type="DNASU" id="42863"/>
<dbReference type="EnsemblMetazoa" id="FBtr0084547">
    <property type="protein sequence ID" value="FBpp0083932"/>
    <property type="gene ID" value="FBgn0266673"/>
</dbReference>
<dbReference type="GeneID" id="42863"/>
<dbReference type="KEGG" id="dme:Dmel_CG6159"/>
<dbReference type="UCSC" id="CG6159-RA">
    <property type="organism name" value="d. melanogaster"/>
</dbReference>
<dbReference type="AGR" id="FB:FBgn0266673"/>
<dbReference type="CTD" id="42863"/>
<dbReference type="FlyBase" id="FBgn0266673">
    <property type="gene designation" value="Sec10"/>
</dbReference>
<dbReference type="VEuPathDB" id="VectorBase:FBgn0266673"/>
<dbReference type="eggNOG" id="KOG3745">
    <property type="taxonomic scope" value="Eukaryota"/>
</dbReference>
<dbReference type="HOGENOM" id="CLU_020771_1_0_1"/>
<dbReference type="InParanoid" id="Q9XTM1"/>
<dbReference type="OMA" id="PLCKHHY"/>
<dbReference type="OrthoDB" id="125856at2759"/>
<dbReference type="PhylomeDB" id="Q9XTM1"/>
<dbReference type="Reactome" id="R-DME-264876">
    <property type="pathway name" value="Insulin processing"/>
</dbReference>
<dbReference type="Reactome" id="R-DME-5620916">
    <property type="pathway name" value="VxPx cargo-targeting to cilium"/>
</dbReference>
<dbReference type="SignaLink" id="Q9XTM1"/>
<dbReference type="BioGRID-ORCS" id="42863">
    <property type="hits" value="0 hits in 1 CRISPR screen"/>
</dbReference>
<dbReference type="GenomeRNAi" id="42863"/>
<dbReference type="PRO" id="PR:Q9XTM1"/>
<dbReference type="Proteomes" id="UP000000803">
    <property type="component" value="Chromosome 3R"/>
</dbReference>
<dbReference type="Bgee" id="FBgn0266673">
    <property type="expression patterns" value="Expressed in embryonic/larval hemocyte (Drosophila) and 143 other cell types or tissues"/>
</dbReference>
<dbReference type="ExpressionAtlas" id="Q9XTM1">
    <property type="expression patterns" value="baseline and differential"/>
</dbReference>
<dbReference type="GO" id="GO:0000145">
    <property type="term" value="C:exocyst"/>
    <property type="evidence" value="ECO:0000314"/>
    <property type="project" value="FlyBase"/>
</dbReference>
<dbReference type="GO" id="GO:0098793">
    <property type="term" value="C:presynapse"/>
    <property type="evidence" value="ECO:0007669"/>
    <property type="project" value="GOC"/>
</dbReference>
<dbReference type="GO" id="GO:0008013">
    <property type="term" value="F:beta-catenin binding"/>
    <property type="evidence" value="ECO:0000353"/>
    <property type="project" value="FlyBase"/>
</dbReference>
<dbReference type="GO" id="GO:0006887">
    <property type="term" value="P:exocytosis"/>
    <property type="evidence" value="ECO:0000318"/>
    <property type="project" value="GO_Central"/>
</dbReference>
<dbReference type="GO" id="GO:0006893">
    <property type="term" value="P:Golgi to plasma membrane transport"/>
    <property type="evidence" value="ECO:0000318"/>
    <property type="project" value="GO_Central"/>
</dbReference>
<dbReference type="GO" id="GO:0007269">
    <property type="term" value="P:neurotransmitter secretion"/>
    <property type="evidence" value="ECO:0000303"/>
    <property type="project" value="FlyBase"/>
</dbReference>
<dbReference type="GO" id="GO:0015031">
    <property type="term" value="P:protein transport"/>
    <property type="evidence" value="ECO:0007669"/>
    <property type="project" value="UniProtKB-KW"/>
</dbReference>
<dbReference type="GO" id="GO:0046718">
    <property type="term" value="P:symbiont entry into host cell"/>
    <property type="evidence" value="ECO:0007001"/>
    <property type="project" value="FlyBase"/>
</dbReference>
<dbReference type="GO" id="GO:0016081">
    <property type="term" value="P:synaptic vesicle docking"/>
    <property type="evidence" value="ECO:0000303"/>
    <property type="project" value="FlyBase"/>
</dbReference>
<dbReference type="GO" id="GO:0016080">
    <property type="term" value="P:synaptic vesicle targeting"/>
    <property type="evidence" value="ECO:0000303"/>
    <property type="project" value="FlyBase"/>
</dbReference>
<dbReference type="GO" id="GO:0090522">
    <property type="term" value="P:vesicle tethering involved in exocytosis"/>
    <property type="evidence" value="ECO:0000305"/>
    <property type="project" value="FlyBase"/>
</dbReference>
<dbReference type="GO" id="GO:0016192">
    <property type="term" value="P:vesicle-mediated transport"/>
    <property type="evidence" value="ECO:0000250"/>
    <property type="project" value="FlyBase"/>
</dbReference>
<dbReference type="Gene3D" id="1.20.58.1970">
    <property type="match status" value="1"/>
</dbReference>
<dbReference type="InterPro" id="IPR009976">
    <property type="entry name" value="Sec10-like"/>
</dbReference>
<dbReference type="InterPro" id="IPR048627">
    <property type="entry name" value="Sec10_HB"/>
</dbReference>
<dbReference type="InterPro" id="IPR048625">
    <property type="entry name" value="Sec10_N"/>
</dbReference>
<dbReference type="PANTHER" id="PTHR12100:SF0">
    <property type="entry name" value="EXOCYST COMPLEX COMPONENT 5"/>
    <property type="match status" value="1"/>
</dbReference>
<dbReference type="PANTHER" id="PTHR12100">
    <property type="entry name" value="SEC10"/>
    <property type="match status" value="1"/>
</dbReference>
<dbReference type="Pfam" id="PF07393">
    <property type="entry name" value="Sec10_HB"/>
    <property type="match status" value="1"/>
</dbReference>
<dbReference type="Pfam" id="PF20667">
    <property type="entry name" value="Sec10_N"/>
    <property type="match status" value="1"/>
</dbReference>
<protein>
    <recommendedName>
        <fullName>Exocyst complex component 5</fullName>
    </recommendedName>
    <alternativeName>
        <fullName>Exocyst complex component Sec10</fullName>
    </alternativeName>
</protein>
<accession>Q9XTM1</accession>
<accession>Q95TZ8</accession>
<reference key="1">
    <citation type="submission" date="1999-06" db="EMBL/GenBank/DDBJ databases">
        <title>Dissecting the functions of the sec6/8 complex in synaptic transmission.</title>
        <authorList>
            <person name="Zhang Y.Q."/>
            <person name="Andrews H.K."/>
            <person name="Broadie K.S."/>
        </authorList>
    </citation>
    <scope>NUCLEOTIDE SEQUENCE [GENOMIC DNA / MRNA]</scope>
</reference>
<reference key="2">
    <citation type="journal article" date="2000" name="Science">
        <title>The genome sequence of Drosophila melanogaster.</title>
        <authorList>
            <person name="Adams M.D."/>
            <person name="Celniker S.E."/>
            <person name="Holt R.A."/>
            <person name="Evans C.A."/>
            <person name="Gocayne J.D."/>
            <person name="Amanatides P.G."/>
            <person name="Scherer S.E."/>
            <person name="Li P.W."/>
            <person name="Hoskins R.A."/>
            <person name="Galle R.F."/>
            <person name="George R.A."/>
            <person name="Lewis S.E."/>
            <person name="Richards S."/>
            <person name="Ashburner M."/>
            <person name="Henderson S.N."/>
            <person name="Sutton G.G."/>
            <person name="Wortman J.R."/>
            <person name="Yandell M.D."/>
            <person name="Zhang Q."/>
            <person name="Chen L.X."/>
            <person name="Brandon R.C."/>
            <person name="Rogers Y.-H.C."/>
            <person name="Blazej R.G."/>
            <person name="Champe M."/>
            <person name="Pfeiffer B.D."/>
            <person name="Wan K.H."/>
            <person name="Doyle C."/>
            <person name="Baxter E.G."/>
            <person name="Helt G."/>
            <person name="Nelson C.R."/>
            <person name="Miklos G.L.G."/>
            <person name="Abril J.F."/>
            <person name="Agbayani A."/>
            <person name="An H.-J."/>
            <person name="Andrews-Pfannkoch C."/>
            <person name="Baldwin D."/>
            <person name="Ballew R.M."/>
            <person name="Basu A."/>
            <person name="Baxendale J."/>
            <person name="Bayraktaroglu L."/>
            <person name="Beasley E.M."/>
            <person name="Beeson K.Y."/>
            <person name="Benos P.V."/>
            <person name="Berman B.P."/>
            <person name="Bhandari D."/>
            <person name="Bolshakov S."/>
            <person name="Borkova D."/>
            <person name="Botchan M.R."/>
            <person name="Bouck J."/>
            <person name="Brokstein P."/>
            <person name="Brottier P."/>
            <person name="Burtis K.C."/>
            <person name="Busam D.A."/>
            <person name="Butler H."/>
            <person name="Cadieu E."/>
            <person name="Center A."/>
            <person name="Chandra I."/>
            <person name="Cherry J.M."/>
            <person name="Cawley S."/>
            <person name="Dahlke C."/>
            <person name="Davenport L.B."/>
            <person name="Davies P."/>
            <person name="de Pablos B."/>
            <person name="Delcher A."/>
            <person name="Deng Z."/>
            <person name="Mays A.D."/>
            <person name="Dew I."/>
            <person name="Dietz S.M."/>
            <person name="Dodson K."/>
            <person name="Doup L.E."/>
            <person name="Downes M."/>
            <person name="Dugan-Rocha S."/>
            <person name="Dunkov B.C."/>
            <person name="Dunn P."/>
            <person name="Durbin K.J."/>
            <person name="Evangelista C.C."/>
            <person name="Ferraz C."/>
            <person name="Ferriera S."/>
            <person name="Fleischmann W."/>
            <person name="Fosler C."/>
            <person name="Gabrielian A.E."/>
            <person name="Garg N.S."/>
            <person name="Gelbart W.M."/>
            <person name="Glasser K."/>
            <person name="Glodek A."/>
            <person name="Gong F."/>
            <person name="Gorrell J.H."/>
            <person name="Gu Z."/>
            <person name="Guan P."/>
            <person name="Harris M."/>
            <person name="Harris N.L."/>
            <person name="Harvey D.A."/>
            <person name="Heiman T.J."/>
            <person name="Hernandez J.R."/>
            <person name="Houck J."/>
            <person name="Hostin D."/>
            <person name="Houston K.A."/>
            <person name="Howland T.J."/>
            <person name="Wei M.-H."/>
            <person name="Ibegwam C."/>
            <person name="Jalali M."/>
            <person name="Kalush F."/>
            <person name="Karpen G.H."/>
            <person name="Ke Z."/>
            <person name="Kennison J.A."/>
            <person name="Ketchum K.A."/>
            <person name="Kimmel B.E."/>
            <person name="Kodira C.D."/>
            <person name="Kraft C.L."/>
            <person name="Kravitz S."/>
            <person name="Kulp D."/>
            <person name="Lai Z."/>
            <person name="Lasko P."/>
            <person name="Lei Y."/>
            <person name="Levitsky A.A."/>
            <person name="Li J.H."/>
            <person name="Li Z."/>
            <person name="Liang Y."/>
            <person name="Lin X."/>
            <person name="Liu X."/>
            <person name="Mattei B."/>
            <person name="McIntosh T.C."/>
            <person name="McLeod M.P."/>
            <person name="McPherson D."/>
            <person name="Merkulov G."/>
            <person name="Milshina N.V."/>
            <person name="Mobarry C."/>
            <person name="Morris J."/>
            <person name="Moshrefi A."/>
            <person name="Mount S.M."/>
            <person name="Moy M."/>
            <person name="Murphy B."/>
            <person name="Murphy L."/>
            <person name="Muzny D.M."/>
            <person name="Nelson D.L."/>
            <person name="Nelson D.R."/>
            <person name="Nelson K.A."/>
            <person name="Nixon K."/>
            <person name="Nusskern D.R."/>
            <person name="Pacleb J.M."/>
            <person name="Palazzolo M."/>
            <person name="Pittman G.S."/>
            <person name="Pan S."/>
            <person name="Pollard J."/>
            <person name="Puri V."/>
            <person name="Reese M.G."/>
            <person name="Reinert K."/>
            <person name="Remington K."/>
            <person name="Saunders R.D.C."/>
            <person name="Scheeler F."/>
            <person name="Shen H."/>
            <person name="Shue B.C."/>
            <person name="Siden-Kiamos I."/>
            <person name="Simpson M."/>
            <person name="Skupski M.P."/>
            <person name="Smith T.J."/>
            <person name="Spier E."/>
            <person name="Spradling A.C."/>
            <person name="Stapleton M."/>
            <person name="Strong R."/>
            <person name="Sun E."/>
            <person name="Svirskas R."/>
            <person name="Tector C."/>
            <person name="Turner R."/>
            <person name="Venter E."/>
            <person name="Wang A.H."/>
            <person name="Wang X."/>
            <person name="Wang Z.-Y."/>
            <person name="Wassarman D.A."/>
            <person name="Weinstock G.M."/>
            <person name="Weissenbach J."/>
            <person name="Williams S.M."/>
            <person name="Woodage T."/>
            <person name="Worley K.C."/>
            <person name="Wu D."/>
            <person name="Yang S."/>
            <person name="Yao Q.A."/>
            <person name="Ye J."/>
            <person name="Yeh R.-F."/>
            <person name="Zaveri J.S."/>
            <person name="Zhan M."/>
            <person name="Zhang G."/>
            <person name="Zhao Q."/>
            <person name="Zheng L."/>
            <person name="Zheng X.H."/>
            <person name="Zhong F.N."/>
            <person name="Zhong W."/>
            <person name="Zhou X."/>
            <person name="Zhu S.C."/>
            <person name="Zhu X."/>
            <person name="Smith H.O."/>
            <person name="Gibbs R.A."/>
            <person name="Myers E.W."/>
            <person name="Rubin G.M."/>
            <person name="Venter J.C."/>
        </authorList>
    </citation>
    <scope>NUCLEOTIDE SEQUENCE [LARGE SCALE GENOMIC DNA]</scope>
    <source>
        <strain>Berkeley</strain>
    </source>
</reference>
<reference key="3">
    <citation type="journal article" date="2002" name="Genome Biol.">
        <title>Annotation of the Drosophila melanogaster euchromatic genome: a systematic review.</title>
        <authorList>
            <person name="Misra S."/>
            <person name="Crosby M.A."/>
            <person name="Mungall C.J."/>
            <person name="Matthews B.B."/>
            <person name="Campbell K.S."/>
            <person name="Hradecky P."/>
            <person name="Huang Y."/>
            <person name="Kaminker J.S."/>
            <person name="Millburn G.H."/>
            <person name="Prochnik S.E."/>
            <person name="Smith C.D."/>
            <person name="Tupy J.L."/>
            <person name="Whitfield E.J."/>
            <person name="Bayraktaroglu L."/>
            <person name="Berman B.P."/>
            <person name="Bettencourt B.R."/>
            <person name="Celniker S.E."/>
            <person name="de Grey A.D.N.J."/>
            <person name="Drysdale R.A."/>
            <person name="Harris N.L."/>
            <person name="Richter J."/>
            <person name="Russo S."/>
            <person name="Schroeder A.J."/>
            <person name="Shu S.Q."/>
            <person name="Stapleton M."/>
            <person name="Yamada C."/>
            <person name="Ashburner M."/>
            <person name="Gelbart W.M."/>
            <person name="Rubin G.M."/>
            <person name="Lewis S.E."/>
        </authorList>
    </citation>
    <scope>GENOME REANNOTATION</scope>
    <source>
        <strain>Berkeley</strain>
    </source>
</reference>
<reference key="4">
    <citation type="journal article" date="2002" name="Genome Biol.">
        <title>A Drosophila full-length cDNA resource.</title>
        <authorList>
            <person name="Stapleton M."/>
            <person name="Carlson J.W."/>
            <person name="Brokstein P."/>
            <person name="Yu C."/>
            <person name="Champe M."/>
            <person name="George R.A."/>
            <person name="Guarin H."/>
            <person name="Kronmiller B."/>
            <person name="Pacleb J.M."/>
            <person name="Park S."/>
            <person name="Wan K.H."/>
            <person name="Rubin G.M."/>
            <person name="Celniker S.E."/>
        </authorList>
    </citation>
    <scope>NUCLEOTIDE SEQUENCE [LARGE SCALE MRNA] OF 175-710</scope>
    <source>
        <strain>Berkeley</strain>
        <tissue>Head</tissue>
    </source>
</reference>
<name>EXOC5_DROME</name>
<sequence>MLSQYMEEFEQEPFEVGEFIERLTWRTNNELQNSEDFHPVALHDTFIQTIKDLKILQEKQQSKCERLEESLRQEKESHAKKIAKLQERHQTAIDVFGQLDEKINSVAGKIMHLGEQLENVNTPRSRSVEAQKLLNFMSEFLAAGPVIVNDIFADAARLSEAADVIQKLYAISQDLPPGNFAESKRKIEKKYDEVERRLIEEFATAQKSEDIERMKTLAQILSQFKGYTQCVDAYIEQSQMQPYSGKDIFIGIVPLCKHHYEIIQKVFANPQQVMSKFILNIYQLKLHQYAMTKLEDKKDEEKYLRTLYELYSRTLKLSTDLQIYMSTIDDDLLQKLTQQIFIKHLAGYAEMETKCLTAKCSTELEKFYASKKHQKTATTKGFRRNMEVLIATRANINIAAIEDYGGETFLSEELAINMLQEAKASLKRCRLLSNETELPGNAIKLNDILLRFLMHEHVDYALELGLQAVPLAEGRVFPQLYFFDVVQKTNIIVHLLDKLCHTSVIPCVSNTPKYSDYVFKKRILMEQIETKLDQGLDRSISAVIGWVKVYLQYEQKKTDYKPETDVDTISSAACLQVVQNLQPVIVQIKKCVDGENLQNVLTEFGTRLHRVIYDHLQTMQFNTAGAMCAICDVNEYRKCIRELDSPLVTQLFDILHALCNLLLVKPQNLQEVCTGDTLNYLDKSVVRQFIQLRTDFRIIKNTNYLKGIIE</sequence>
<feature type="chain" id="PRO_0000118947" description="Exocyst complex component 5">
    <location>
        <begin position="1"/>
        <end position="710"/>
    </location>
</feature>
<feature type="coiled-coil region" evidence="2">
    <location>
        <begin position="44"/>
        <end position="96"/>
    </location>
</feature>
<keyword id="KW-0175">Coiled coil</keyword>
<keyword id="KW-0268">Exocytosis</keyword>
<keyword id="KW-0653">Protein transport</keyword>
<keyword id="KW-1185">Reference proteome</keyword>
<keyword id="KW-0813">Transport</keyword>
<comment type="function">
    <text>Component of the exocyst complex involved in the docking of exocytic vesicles with fusion sites on the plasma membrane.</text>
</comment>
<comment type="subunit">
    <text evidence="1">The exocyst complex is composed of Sec3/Exoc1, Sec5/Exoc2, Sec6/Exoc3, Sec8/Exoc4, Sec10/Exoc5, Sec15/Exoc6, Exo70/Exoc7 and Exo84/Exoc8.</text>
</comment>
<comment type="similarity">
    <text evidence="3">Belongs to the SEC10 family.</text>
</comment>
<comment type="sequence caution" evidence="3">
    <conflict type="erroneous initiation">
        <sequence resource="EMBL-CDS" id="AAL13643"/>
    </conflict>
</comment>
<gene>
    <name evidence="4" type="primary">Sec10</name>
    <name evidence="4" type="ORF">CG6159</name>
</gene>